<dbReference type="EC" id="1.97.1.12" evidence="1"/>
<dbReference type="EMBL" id="CP000552">
    <property type="protein sequence ID" value="ABM72909.1"/>
    <property type="molecule type" value="Genomic_DNA"/>
</dbReference>
<dbReference type="RefSeq" id="WP_011821001.1">
    <property type="nucleotide sequence ID" value="NC_008817.1"/>
</dbReference>
<dbReference type="SMR" id="A2BYP8"/>
<dbReference type="STRING" id="167542.P9515_17021"/>
<dbReference type="GeneID" id="60201600"/>
<dbReference type="KEGG" id="pmc:P9515_17021"/>
<dbReference type="eggNOG" id="COG2885">
    <property type="taxonomic scope" value="Bacteria"/>
</dbReference>
<dbReference type="HOGENOM" id="CLU_016126_1_0_3"/>
<dbReference type="OrthoDB" id="499313at2"/>
<dbReference type="Proteomes" id="UP000001589">
    <property type="component" value="Chromosome"/>
</dbReference>
<dbReference type="GO" id="GO:0009522">
    <property type="term" value="C:photosystem I"/>
    <property type="evidence" value="ECO:0007669"/>
    <property type="project" value="UniProtKB-KW"/>
</dbReference>
<dbReference type="GO" id="GO:0031676">
    <property type="term" value="C:plasma membrane-derived thylakoid membrane"/>
    <property type="evidence" value="ECO:0007669"/>
    <property type="project" value="UniProtKB-SubCell"/>
</dbReference>
<dbReference type="GO" id="GO:0051539">
    <property type="term" value="F:4 iron, 4 sulfur cluster binding"/>
    <property type="evidence" value="ECO:0007669"/>
    <property type="project" value="UniProtKB-KW"/>
</dbReference>
<dbReference type="GO" id="GO:0016168">
    <property type="term" value="F:chlorophyll binding"/>
    <property type="evidence" value="ECO:0007669"/>
    <property type="project" value="UniProtKB-KW"/>
</dbReference>
<dbReference type="GO" id="GO:0009055">
    <property type="term" value="F:electron transfer activity"/>
    <property type="evidence" value="ECO:0007669"/>
    <property type="project" value="UniProtKB-UniRule"/>
</dbReference>
<dbReference type="GO" id="GO:0000287">
    <property type="term" value="F:magnesium ion binding"/>
    <property type="evidence" value="ECO:0007669"/>
    <property type="project" value="UniProtKB-UniRule"/>
</dbReference>
<dbReference type="GO" id="GO:0016491">
    <property type="term" value="F:oxidoreductase activity"/>
    <property type="evidence" value="ECO:0007669"/>
    <property type="project" value="UniProtKB-KW"/>
</dbReference>
<dbReference type="GO" id="GO:0015979">
    <property type="term" value="P:photosynthesis"/>
    <property type="evidence" value="ECO:0007669"/>
    <property type="project" value="UniProtKB-UniRule"/>
</dbReference>
<dbReference type="FunFam" id="1.20.1130.10:FF:000001">
    <property type="entry name" value="Photosystem I P700 chlorophyll a apoprotein A2"/>
    <property type="match status" value="1"/>
</dbReference>
<dbReference type="Gene3D" id="1.20.1130.10">
    <property type="entry name" value="Photosystem I PsaA/PsaB"/>
    <property type="match status" value="1"/>
</dbReference>
<dbReference type="HAMAP" id="MF_00482">
    <property type="entry name" value="PSI_PsaB"/>
    <property type="match status" value="1"/>
</dbReference>
<dbReference type="InterPro" id="IPR001280">
    <property type="entry name" value="PSI_PsaA/B"/>
</dbReference>
<dbReference type="InterPro" id="IPR020586">
    <property type="entry name" value="PSI_PsaA/B_CS"/>
</dbReference>
<dbReference type="InterPro" id="IPR036408">
    <property type="entry name" value="PSI_PsaA/B_sf"/>
</dbReference>
<dbReference type="InterPro" id="IPR006244">
    <property type="entry name" value="PSI_PsaB"/>
</dbReference>
<dbReference type="NCBIfam" id="TIGR01336">
    <property type="entry name" value="psaB"/>
    <property type="match status" value="1"/>
</dbReference>
<dbReference type="PANTHER" id="PTHR30128">
    <property type="entry name" value="OUTER MEMBRANE PROTEIN, OMPA-RELATED"/>
    <property type="match status" value="1"/>
</dbReference>
<dbReference type="PANTHER" id="PTHR30128:SF19">
    <property type="entry name" value="PHOTOSYSTEM I P700 CHLOROPHYLL A APOPROTEIN A1-RELATED"/>
    <property type="match status" value="1"/>
</dbReference>
<dbReference type="Pfam" id="PF00223">
    <property type="entry name" value="PsaA_PsaB"/>
    <property type="match status" value="1"/>
</dbReference>
<dbReference type="PIRSF" id="PIRSF002905">
    <property type="entry name" value="PSI_A"/>
    <property type="match status" value="1"/>
</dbReference>
<dbReference type="PRINTS" id="PR00257">
    <property type="entry name" value="PHOTSYSPSAAB"/>
</dbReference>
<dbReference type="SUPFAM" id="SSF81558">
    <property type="entry name" value="Photosystem I subunits PsaA/PsaB"/>
    <property type="match status" value="1"/>
</dbReference>
<dbReference type="PROSITE" id="PS00419">
    <property type="entry name" value="PHOTOSYSTEM_I_PSAAB"/>
    <property type="match status" value="1"/>
</dbReference>
<reference key="1">
    <citation type="journal article" date="2007" name="PLoS Genet.">
        <title>Patterns and implications of gene gain and loss in the evolution of Prochlorococcus.</title>
        <authorList>
            <person name="Kettler G.C."/>
            <person name="Martiny A.C."/>
            <person name="Huang K."/>
            <person name="Zucker J."/>
            <person name="Coleman M.L."/>
            <person name="Rodrigue S."/>
            <person name="Chen F."/>
            <person name="Lapidus A."/>
            <person name="Ferriera S."/>
            <person name="Johnson J."/>
            <person name="Steglich C."/>
            <person name="Church G.M."/>
            <person name="Richardson P."/>
            <person name="Chisholm S.W."/>
        </authorList>
    </citation>
    <scope>NUCLEOTIDE SEQUENCE [LARGE SCALE GENOMIC DNA]</scope>
    <source>
        <strain>MIT 9515</strain>
    </source>
</reference>
<protein>
    <recommendedName>
        <fullName evidence="1">Photosystem I P700 chlorophyll a apoprotein A2</fullName>
        <ecNumber evidence="1">1.97.1.12</ecNumber>
    </recommendedName>
    <alternativeName>
        <fullName evidence="1">PsaB</fullName>
    </alternativeName>
</protein>
<comment type="function">
    <text evidence="1">PsaA and PsaB bind P700, the primary electron donor of photosystem I (PSI), as well as the electron acceptors A0, A1 and FX. PSI is a plastocyanin/cytochrome c6-ferredoxin oxidoreductase, converting photonic excitation into a charge separation, which transfers an electron from the donor P700 chlorophyll pair to the spectroscopically characterized acceptors A0, A1, FX, FA and FB in turn. Oxidized P700 is reduced on the lumenal side of the thylakoid membrane by plastocyanin or cytochrome c6.</text>
</comment>
<comment type="catalytic activity">
    <reaction evidence="1">
        <text>reduced [plastocyanin] + hnu + oxidized [2Fe-2S]-[ferredoxin] = oxidized [plastocyanin] + reduced [2Fe-2S]-[ferredoxin]</text>
        <dbReference type="Rhea" id="RHEA:30407"/>
        <dbReference type="Rhea" id="RHEA-COMP:10000"/>
        <dbReference type="Rhea" id="RHEA-COMP:10001"/>
        <dbReference type="Rhea" id="RHEA-COMP:10039"/>
        <dbReference type="Rhea" id="RHEA-COMP:10040"/>
        <dbReference type="ChEBI" id="CHEBI:29036"/>
        <dbReference type="ChEBI" id="CHEBI:30212"/>
        <dbReference type="ChEBI" id="CHEBI:33737"/>
        <dbReference type="ChEBI" id="CHEBI:33738"/>
        <dbReference type="ChEBI" id="CHEBI:49552"/>
        <dbReference type="EC" id="1.97.1.12"/>
    </reaction>
</comment>
<comment type="cofactor">
    <text evidence="1">PSI electron transfer chain: 5 divinyl chlorophyll a, 1 divinyl chlorophyll a', 2 phylloquinones and 3 4Fe-4S clusters. PSI core antenna: 90 divinyl chlorophyll a, 22 carotenoids, 3 phospholipids and 1 galactolipid. P700 is a divinyl chlorophyll a/divinyl chlorophyll a' dimer, A0 is one or more divinyl chlorophyll a, A1 is one or both phylloquinones and FX is a shared 4Fe-4S iron-sulfur center.</text>
</comment>
<comment type="subunit">
    <text evidence="1">The PsaA/B heterodimer binds the P700 divinyl chlorophyll special pair and subsequent electron acceptors. PSI consists of a core antenna complex that captures photons, and an electron transfer chain that converts photonic excitation into a charge separation. The cyanobacterial PSI reaction center is composed of one copy each of PsaA,B,C,D,E,F,I,J,K,L,M and X, and forms trimeric complexes.</text>
</comment>
<comment type="subcellular location">
    <subcellularLocation>
        <location evidence="1">Cellular thylakoid membrane</location>
        <topology evidence="1">Multi-pass membrane protein</topology>
    </subcellularLocation>
</comment>
<comment type="similarity">
    <text evidence="1">Belongs to the PsaA/PsaB family.</text>
</comment>
<proteinExistence type="inferred from homology"/>
<accession>A2BYP8</accession>
<sequence length="742" mass="82725">MATKFPAFNQGLAQDPTTRRIWYGIATAHDFESHDGMTEEKLYQKLFSTHFGHLAIIALWVAGNLFHIAWQGNFEQFVLDPTHVRPIAHAIWDPHFGSGITEAMTQAGADGPVNIAYSGLYHWWYTIGMRTNEQLFQASIFMSILACWTLFAGWLHLQPKFRPSLAWFKNNESRLNHHLAVLFGFSSIAWTGHLVHVAIPESRGIHVGWDNWLTVLPHPAGLTPFFTLNWGAYAQNPDSLEQVFGTAEGAGTAIFTFLGGLHPQSEALWLTDIAHHHIAIGTVFIIAGHMYRNTFGIGHSLKEITEAHNTRHPLDPHKGSFGINHDGLYETVTNSLHFQLGLALAALGVATSLVAQHMGALPSYAFIARDYTTQSALYTHHQYIAMFLMVGAFAHGAIFFVRDYDPELNKDNVLARVLGTKEALISHLSWVTMILGFHTLGIYVHNDVVVAFGNPEKQILIEPVFAQFVQAAQGKMMYGFNALLSDPTSAASVAANSLPGNHYWMDLINRQDALSAFLPIGPADFLVHHAIALGLHTTALILIKGALDARGTKLIPDKKDLGYAFPCDGPGRGGTCDSSSWDAMYLAMFWALNLIAWVTFYWHWKHLAIWQGNVAQFNESGTYLMGWFRDYLWLNSAQLINGYNPFGVNSLSVWAWMFLFGHLVWATGFMFLISWRGYWQELIETLVWAHQRTPIANLVGWRDKPVALSIVQARLVGLAHFTIGNILTFGAFVIASTSGKFG</sequence>
<organism>
    <name type="scientific">Prochlorococcus marinus (strain MIT 9515)</name>
    <dbReference type="NCBI Taxonomy" id="167542"/>
    <lineage>
        <taxon>Bacteria</taxon>
        <taxon>Bacillati</taxon>
        <taxon>Cyanobacteriota</taxon>
        <taxon>Cyanophyceae</taxon>
        <taxon>Synechococcales</taxon>
        <taxon>Prochlorococcaceae</taxon>
        <taxon>Prochlorococcus</taxon>
    </lineage>
</organism>
<evidence type="ECO:0000255" key="1">
    <source>
        <dbReference type="HAMAP-Rule" id="MF_00482"/>
    </source>
</evidence>
<feature type="chain" id="PRO_0000300020" description="Photosystem I P700 chlorophyll a apoprotein A2">
    <location>
        <begin position="1"/>
        <end position="742"/>
    </location>
</feature>
<feature type="transmembrane region" description="Helical; Name=I" evidence="1">
    <location>
        <begin position="46"/>
        <end position="69"/>
    </location>
</feature>
<feature type="transmembrane region" description="Helical; Name=II" evidence="1">
    <location>
        <begin position="135"/>
        <end position="158"/>
    </location>
</feature>
<feature type="transmembrane region" description="Helical; Name=III" evidence="1">
    <location>
        <begin position="175"/>
        <end position="199"/>
    </location>
</feature>
<feature type="transmembrane region" description="Helical; Name=IV" evidence="1">
    <location>
        <begin position="273"/>
        <end position="291"/>
    </location>
</feature>
<feature type="transmembrane region" description="Helical; Name=V" evidence="1">
    <location>
        <begin position="336"/>
        <end position="359"/>
    </location>
</feature>
<feature type="transmembrane region" description="Helical; Name=VI" evidence="1">
    <location>
        <begin position="375"/>
        <end position="401"/>
    </location>
</feature>
<feature type="transmembrane region" description="Helical; Name=VII" evidence="1">
    <location>
        <begin position="423"/>
        <end position="445"/>
    </location>
</feature>
<feature type="transmembrane region" description="Helical; Name=VIII" evidence="1">
    <location>
        <begin position="525"/>
        <end position="543"/>
    </location>
</feature>
<feature type="transmembrane region" description="Helical; Name=IX" evidence="1">
    <location>
        <begin position="583"/>
        <end position="604"/>
    </location>
</feature>
<feature type="transmembrane region" description="Helical; Name=X" evidence="1">
    <location>
        <begin position="651"/>
        <end position="673"/>
    </location>
</feature>
<feature type="transmembrane region" description="Helical; Name=XI" evidence="1">
    <location>
        <begin position="715"/>
        <end position="735"/>
    </location>
</feature>
<feature type="binding site" evidence="1">
    <location>
        <position position="567"/>
    </location>
    <ligand>
        <name>[4Fe-4S] cluster</name>
        <dbReference type="ChEBI" id="CHEBI:49883"/>
        <note>ligand shared between dimeric partners</note>
    </ligand>
</feature>
<feature type="binding site" evidence="1">
    <location>
        <position position="576"/>
    </location>
    <ligand>
        <name>[4Fe-4S] cluster</name>
        <dbReference type="ChEBI" id="CHEBI:49883"/>
        <note>ligand shared between dimeric partners</note>
    </ligand>
</feature>
<feature type="binding site" description="axial binding residue" evidence="1">
    <location>
        <position position="662"/>
    </location>
    <ligand>
        <name>divinyl chlorophyll a</name>
        <dbReference type="ChEBI" id="CHEBI:73095"/>
        <label>B1</label>
    </ligand>
    <ligandPart>
        <name>Mg</name>
        <dbReference type="ChEBI" id="CHEBI:25107"/>
    </ligandPart>
</feature>
<feature type="binding site" description="axial binding residue" evidence="1">
    <location>
        <position position="670"/>
    </location>
    <ligand>
        <name>divinyl chlorophyll a</name>
        <dbReference type="ChEBI" id="CHEBI:73095"/>
        <label>B3</label>
    </ligand>
    <ligandPart>
        <name>Mg</name>
        <dbReference type="ChEBI" id="CHEBI:25107"/>
    </ligandPart>
</feature>
<feature type="binding site" evidence="1">
    <location>
        <position position="678"/>
    </location>
    <ligand>
        <name>divinyl chlorophyll a</name>
        <dbReference type="ChEBI" id="CHEBI:73095"/>
        <label>B3</label>
    </ligand>
</feature>
<feature type="binding site" evidence="1">
    <location>
        <position position="679"/>
    </location>
    <ligand>
        <name>phylloquinone</name>
        <dbReference type="ChEBI" id="CHEBI:18067"/>
        <label>B</label>
    </ligand>
</feature>
<gene>
    <name evidence="1" type="primary">psaB</name>
    <name type="ordered locus">P9515_17021</name>
</gene>
<name>PSAB_PROM5</name>
<keyword id="KW-0004">4Fe-4S</keyword>
<keyword id="KW-0148">Chlorophyll</keyword>
<keyword id="KW-0157">Chromophore</keyword>
<keyword id="KW-0249">Electron transport</keyword>
<keyword id="KW-0408">Iron</keyword>
<keyword id="KW-0411">Iron-sulfur</keyword>
<keyword id="KW-0460">Magnesium</keyword>
<keyword id="KW-0472">Membrane</keyword>
<keyword id="KW-0479">Metal-binding</keyword>
<keyword id="KW-0560">Oxidoreductase</keyword>
<keyword id="KW-0602">Photosynthesis</keyword>
<keyword id="KW-0603">Photosystem I</keyword>
<keyword id="KW-0793">Thylakoid</keyword>
<keyword id="KW-0812">Transmembrane</keyword>
<keyword id="KW-1133">Transmembrane helix</keyword>
<keyword id="KW-0813">Transport</keyword>